<reference key="1">
    <citation type="journal article" date="2005" name="Genome Res.">
        <title>Comparative genome sequencing of Drosophila pseudoobscura: chromosomal, gene, and cis-element evolution.</title>
        <authorList>
            <person name="Richards S."/>
            <person name="Liu Y."/>
            <person name="Bettencourt B.R."/>
            <person name="Hradecky P."/>
            <person name="Letovsky S."/>
            <person name="Nielsen R."/>
            <person name="Thornton K."/>
            <person name="Hubisz M.J."/>
            <person name="Chen R."/>
            <person name="Meisel R.P."/>
            <person name="Couronne O."/>
            <person name="Hua S."/>
            <person name="Smith M.A."/>
            <person name="Zhang P."/>
            <person name="Liu J."/>
            <person name="Bussemaker H.J."/>
            <person name="van Batenburg M.F."/>
            <person name="Howells S.L."/>
            <person name="Scherer S.E."/>
            <person name="Sodergren E."/>
            <person name="Matthews B.B."/>
            <person name="Crosby M.A."/>
            <person name="Schroeder A.J."/>
            <person name="Ortiz-Barrientos D."/>
            <person name="Rives C.M."/>
            <person name="Metzker M.L."/>
            <person name="Muzny D.M."/>
            <person name="Scott G."/>
            <person name="Steffen D."/>
            <person name="Wheeler D.A."/>
            <person name="Worley K.C."/>
            <person name="Havlak P."/>
            <person name="Durbin K.J."/>
            <person name="Egan A."/>
            <person name="Gill R."/>
            <person name="Hume J."/>
            <person name="Morgan M.B."/>
            <person name="Miner G."/>
            <person name="Hamilton C."/>
            <person name="Huang Y."/>
            <person name="Waldron L."/>
            <person name="Verduzco D."/>
            <person name="Clerc-Blankenburg K.P."/>
            <person name="Dubchak I."/>
            <person name="Noor M.A.F."/>
            <person name="Anderson W."/>
            <person name="White K.P."/>
            <person name="Clark A.G."/>
            <person name="Schaeffer S.W."/>
            <person name="Gelbart W.M."/>
            <person name="Weinstock G.M."/>
            <person name="Gibbs R.A."/>
        </authorList>
    </citation>
    <scope>NUCLEOTIDE SEQUENCE [LARGE SCALE GENOMIC DNA]</scope>
    <source>
        <strain>MV2-25 / Tucson 14011-0121.94</strain>
    </source>
</reference>
<accession>Q29I16</accession>
<keyword id="KW-0489">Methyltransferase</keyword>
<keyword id="KW-0539">Nucleus</keyword>
<keyword id="KW-1185">Reference proteome</keyword>
<keyword id="KW-0694">RNA-binding</keyword>
<keyword id="KW-0949">S-adenosyl-L-methionine</keyword>
<keyword id="KW-0808">Transferase</keyword>
<keyword id="KW-0819">tRNA processing</keyword>
<keyword id="KW-0820">tRNA-binding</keyword>
<sequence length="247" mass="28537">MVTTTAENEVLTSTSAVTGLPQKRYYRQRAHSNPIADHCFDYPARPEDVDWRSLYPSIRADQEVSFADIGCGYGGFLVTLGELFPEKISIGMEIRVKVSDYVLDRITALRQKSSGTGAYQNIACLRTNAMKYLPNYFRKGQLEKMFFLYPDPHFKRAKHKWRIINQALLSEYAYVLRKGGLVYTMTDVEDLHNWIVTHMDEHPLYERLDEEEANTDPITPKLYQSSEEGAKVVRNKGDHFLAIFRRL</sequence>
<gene>
    <name type="ORF">GA17913</name>
</gene>
<dbReference type="EC" id="2.1.1.33" evidence="1"/>
<dbReference type="EMBL" id="CH379064">
    <property type="protein sequence ID" value="EAL31590.2"/>
    <property type="molecule type" value="Genomic_DNA"/>
</dbReference>
<dbReference type="SMR" id="Q29I16"/>
<dbReference type="FunCoup" id="Q29I16">
    <property type="interactions" value="1035"/>
</dbReference>
<dbReference type="STRING" id="46245.Q29I16"/>
<dbReference type="EnsemblMetazoa" id="FBtr0286449">
    <property type="protein sequence ID" value="FBpp0284887"/>
    <property type="gene ID" value="FBgn0077922"/>
</dbReference>
<dbReference type="KEGG" id="dpo:4814934"/>
<dbReference type="eggNOG" id="KOG3115">
    <property type="taxonomic scope" value="Eukaryota"/>
</dbReference>
<dbReference type="HOGENOM" id="CLU_050910_3_0_1"/>
<dbReference type="InParanoid" id="Q29I16"/>
<dbReference type="OMA" id="LPNYFAK"/>
<dbReference type="UniPathway" id="UPA00989"/>
<dbReference type="Proteomes" id="UP000001819">
    <property type="component" value="Chromosome X"/>
</dbReference>
<dbReference type="Bgee" id="FBgn0077922">
    <property type="expression patterns" value="Expressed in female reproductive system and 2 other cell types or tissues"/>
</dbReference>
<dbReference type="GO" id="GO:0005634">
    <property type="term" value="C:nucleus"/>
    <property type="evidence" value="ECO:0007669"/>
    <property type="project" value="UniProtKB-SubCell"/>
</dbReference>
<dbReference type="GO" id="GO:0043527">
    <property type="term" value="C:tRNA methyltransferase complex"/>
    <property type="evidence" value="ECO:0007669"/>
    <property type="project" value="TreeGrafter"/>
</dbReference>
<dbReference type="GO" id="GO:0008176">
    <property type="term" value="F:tRNA (guanine(46)-N7)-methyltransferase activity"/>
    <property type="evidence" value="ECO:0007669"/>
    <property type="project" value="UniProtKB-UniRule"/>
</dbReference>
<dbReference type="GO" id="GO:0000049">
    <property type="term" value="F:tRNA binding"/>
    <property type="evidence" value="ECO:0007669"/>
    <property type="project" value="UniProtKB-UniRule"/>
</dbReference>
<dbReference type="FunFam" id="3.40.50.150:FF:000060">
    <property type="entry name" value="tRNA (guanine-N(7)-)-methyltransferase"/>
    <property type="match status" value="1"/>
</dbReference>
<dbReference type="Gene3D" id="3.40.50.150">
    <property type="entry name" value="Vaccinia Virus protein VP39"/>
    <property type="match status" value="1"/>
</dbReference>
<dbReference type="HAMAP" id="MF_03055">
    <property type="entry name" value="tRNA_methyltr_TrmB_euk"/>
    <property type="match status" value="1"/>
</dbReference>
<dbReference type="InterPro" id="IPR029063">
    <property type="entry name" value="SAM-dependent_MTases_sf"/>
</dbReference>
<dbReference type="InterPro" id="IPR025763">
    <property type="entry name" value="Trm8_euk"/>
</dbReference>
<dbReference type="InterPro" id="IPR003358">
    <property type="entry name" value="tRNA_(Gua-N-7)_MeTrfase_Trmb"/>
</dbReference>
<dbReference type="NCBIfam" id="TIGR00091">
    <property type="entry name" value="tRNA (guanosine(46)-N7)-methyltransferase TrmB"/>
    <property type="match status" value="1"/>
</dbReference>
<dbReference type="PANTHER" id="PTHR23417">
    <property type="entry name" value="3-DEOXY-D-MANNO-OCTULOSONIC-ACID TRANSFERASE/TRNA GUANINE-N 7 - -METHYLTRANSFERASE"/>
    <property type="match status" value="1"/>
</dbReference>
<dbReference type="PANTHER" id="PTHR23417:SF16">
    <property type="entry name" value="TRNA (GUANINE-N(7)-)-METHYLTRANSFERASE"/>
    <property type="match status" value="1"/>
</dbReference>
<dbReference type="Pfam" id="PF02390">
    <property type="entry name" value="Methyltransf_4"/>
    <property type="match status" value="1"/>
</dbReference>
<dbReference type="SUPFAM" id="SSF53335">
    <property type="entry name" value="S-adenosyl-L-methionine-dependent methyltransferases"/>
    <property type="match status" value="1"/>
</dbReference>
<dbReference type="PROSITE" id="PS51625">
    <property type="entry name" value="SAM_MT_TRMB"/>
    <property type="match status" value="1"/>
</dbReference>
<protein>
    <recommendedName>
        <fullName evidence="1">tRNA (guanine-N(7)-)-methyltransferase</fullName>
        <ecNumber evidence="1">2.1.1.33</ecNumber>
    </recommendedName>
    <alternativeName>
        <fullName evidence="1">tRNA (guanine(46)-N(7))-methyltransferase</fullName>
    </alternativeName>
    <alternativeName>
        <fullName evidence="1">tRNA(m7G46)-methyltransferase</fullName>
    </alternativeName>
</protein>
<proteinExistence type="inferred from homology"/>
<name>TRMB_DROPS</name>
<feature type="chain" id="PRO_0000370573" description="tRNA (guanine-N(7)-)-methyltransferase">
    <location>
        <begin position="1"/>
        <end position="247"/>
    </location>
</feature>
<feature type="active site" evidence="1">
    <location>
        <position position="151"/>
    </location>
</feature>
<feature type="binding site" evidence="1">
    <location>
        <position position="70"/>
    </location>
    <ligand>
        <name>S-adenosyl-L-methionine</name>
        <dbReference type="ChEBI" id="CHEBI:59789"/>
    </ligand>
</feature>
<feature type="binding site" evidence="1">
    <location>
        <begin position="93"/>
        <end position="94"/>
    </location>
    <ligand>
        <name>S-adenosyl-L-methionine</name>
        <dbReference type="ChEBI" id="CHEBI:59789"/>
    </ligand>
</feature>
<feature type="binding site" evidence="1">
    <location>
        <begin position="128"/>
        <end position="129"/>
    </location>
    <ligand>
        <name>S-adenosyl-L-methionine</name>
        <dbReference type="ChEBI" id="CHEBI:59789"/>
    </ligand>
</feature>
<feature type="binding site" evidence="1">
    <location>
        <position position="148"/>
    </location>
    <ligand>
        <name>S-adenosyl-L-methionine</name>
        <dbReference type="ChEBI" id="CHEBI:59789"/>
    </ligand>
</feature>
<feature type="binding site" evidence="1">
    <location>
        <begin position="226"/>
        <end position="228"/>
    </location>
    <ligand>
        <name>S-adenosyl-L-methionine</name>
        <dbReference type="ChEBI" id="CHEBI:59789"/>
    </ligand>
</feature>
<evidence type="ECO:0000255" key="1">
    <source>
        <dbReference type="HAMAP-Rule" id="MF_03055"/>
    </source>
</evidence>
<organism>
    <name type="scientific">Drosophila pseudoobscura pseudoobscura</name>
    <name type="common">Fruit fly</name>
    <dbReference type="NCBI Taxonomy" id="46245"/>
    <lineage>
        <taxon>Eukaryota</taxon>
        <taxon>Metazoa</taxon>
        <taxon>Ecdysozoa</taxon>
        <taxon>Arthropoda</taxon>
        <taxon>Hexapoda</taxon>
        <taxon>Insecta</taxon>
        <taxon>Pterygota</taxon>
        <taxon>Neoptera</taxon>
        <taxon>Endopterygota</taxon>
        <taxon>Diptera</taxon>
        <taxon>Brachycera</taxon>
        <taxon>Muscomorpha</taxon>
        <taxon>Ephydroidea</taxon>
        <taxon>Drosophilidae</taxon>
        <taxon>Drosophila</taxon>
        <taxon>Sophophora</taxon>
    </lineage>
</organism>
<comment type="function">
    <text evidence="1">Catalyzes the formation of N(7)-methylguanine at position 46 (m7G46) in tRNA.</text>
</comment>
<comment type="catalytic activity">
    <reaction evidence="1">
        <text>guanosine(46) in tRNA + S-adenosyl-L-methionine = N(7)-methylguanosine(46) in tRNA + S-adenosyl-L-homocysteine</text>
        <dbReference type="Rhea" id="RHEA:42708"/>
        <dbReference type="Rhea" id="RHEA-COMP:10188"/>
        <dbReference type="Rhea" id="RHEA-COMP:10189"/>
        <dbReference type="ChEBI" id="CHEBI:57856"/>
        <dbReference type="ChEBI" id="CHEBI:59789"/>
        <dbReference type="ChEBI" id="CHEBI:74269"/>
        <dbReference type="ChEBI" id="CHEBI:74480"/>
        <dbReference type="EC" id="2.1.1.33"/>
    </reaction>
</comment>
<comment type="pathway">
    <text evidence="1">tRNA modification; N(7)-methylguanine-tRNA biosynthesis.</text>
</comment>
<comment type="subcellular location">
    <subcellularLocation>
        <location evidence="1">Nucleus</location>
    </subcellularLocation>
</comment>
<comment type="similarity">
    <text evidence="1">Belongs to the class I-like SAM-binding methyltransferase superfamily. TrmB family.</text>
</comment>